<name>GLO2_HALHL</name>
<accession>A1WXD9</accession>
<protein>
    <recommendedName>
        <fullName evidence="1">Hydroxyacylglutathione hydrolase</fullName>
        <ecNumber evidence="1">3.1.2.6</ecNumber>
    </recommendedName>
    <alternativeName>
        <fullName evidence="1">Glyoxalase II</fullName>
        <shortName evidence="1">Glx II</shortName>
    </alternativeName>
</protein>
<keyword id="KW-0378">Hydrolase</keyword>
<keyword id="KW-0479">Metal-binding</keyword>
<keyword id="KW-1185">Reference proteome</keyword>
<keyword id="KW-0862">Zinc</keyword>
<organism>
    <name type="scientific">Halorhodospira halophila (strain DSM 244 / SL1)</name>
    <name type="common">Ectothiorhodospira halophila (strain DSM 244 / SL1)</name>
    <dbReference type="NCBI Taxonomy" id="349124"/>
    <lineage>
        <taxon>Bacteria</taxon>
        <taxon>Pseudomonadati</taxon>
        <taxon>Pseudomonadota</taxon>
        <taxon>Gammaproteobacteria</taxon>
        <taxon>Chromatiales</taxon>
        <taxon>Ectothiorhodospiraceae</taxon>
        <taxon>Halorhodospira</taxon>
    </lineage>
</organism>
<sequence>MTSADPLAALADNYIWMARDASGTTAFAVDPGDAAVVEAWLHDHQLRLAAVLVTHHHGDHTGGVAELAERHRVPVFGPATETIPTVDHPITGGEHFSLEGFGEFRVLDCPGHTAGHIAYLWEGHLFSGDALFAGGCGRVFEGTAGQMHASLQHLAALPADTRVCCGHEYTVKNLEFAHCADPKNDRLAQRLQAARDARAAGQPTVPSTLAEELATNPFLRTDCPELRRAAQDWCGRDLDQAYEVFATLRRWKDTT</sequence>
<evidence type="ECO:0000255" key="1">
    <source>
        <dbReference type="HAMAP-Rule" id="MF_01374"/>
    </source>
</evidence>
<comment type="function">
    <text evidence="1">Thiolesterase that catalyzes the hydrolysis of S-D-lactoyl-glutathione to form glutathione and D-lactic acid.</text>
</comment>
<comment type="catalytic activity">
    <reaction evidence="1">
        <text>an S-(2-hydroxyacyl)glutathione + H2O = a 2-hydroxy carboxylate + glutathione + H(+)</text>
        <dbReference type="Rhea" id="RHEA:21864"/>
        <dbReference type="ChEBI" id="CHEBI:15377"/>
        <dbReference type="ChEBI" id="CHEBI:15378"/>
        <dbReference type="ChEBI" id="CHEBI:57925"/>
        <dbReference type="ChEBI" id="CHEBI:58896"/>
        <dbReference type="ChEBI" id="CHEBI:71261"/>
        <dbReference type="EC" id="3.1.2.6"/>
    </reaction>
</comment>
<comment type="cofactor">
    <cofactor evidence="1">
        <name>Zn(2+)</name>
        <dbReference type="ChEBI" id="CHEBI:29105"/>
    </cofactor>
    <text evidence="1">Binds 2 Zn(2+) ions per subunit.</text>
</comment>
<comment type="pathway">
    <text evidence="1">Secondary metabolite metabolism; methylglyoxal degradation; (R)-lactate from methylglyoxal: step 2/2.</text>
</comment>
<comment type="subunit">
    <text evidence="1">Monomer.</text>
</comment>
<comment type="similarity">
    <text evidence="1">Belongs to the metallo-beta-lactamase superfamily. Glyoxalase II family.</text>
</comment>
<proteinExistence type="inferred from homology"/>
<reference key="1">
    <citation type="submission" date="2006-12" db="EMBL/GenBank/DDBJ databases">
        <title>Complete sequence of Halorhodospira halophila SL1.</title>
        <authorList>
            <consortium name="US DOE Joint Genome Institute"/>
            <person name="Copeland A."/>
            <person name="Lucas S."/>
            <person name="Lapidus A."/>
            <person name="Barry K."/>
            <person name="Detter J.C."/>
            <person name="Glavina del Rio T."/>
            <person name="Hammon N."/>
            <person name="Israni S."/>
            <person name="Dalin E."/>
            <person name="Tice H."/>
            <person name="Pitluck S."/>
            <person name="Saunders E."/>
            <person name="Brettin T."/>
            <person name="Bruce D."/>
            <person name="Han C."/>
            <person name="Tapia R."/>
            <person name="Schmutz J."/>
            <person name="Larimer F."/>
            <person name="Land M."/>
            <person name="Hauser L."/>
            <person name="Kyrpides N."/>
            <person name="Mikhailova N."/>
            <person name="Hoff W."/>
            <person name="Richardson P."/>
        </authorList>
    </citation>
    <scope>NUCLEOTIDE SEQUENCE [LARGE SCALE GENOMIC DNA]</scope>
    <source>
        <strain>DSM 244 / SL1</strain>
    </source>
</reference>
<gene>
    <name evidence="1" type="primary">gloB</name>
    <name type="ordered locus">Hhal_1587</name>
</gene>
<dbReference type="EC" id="3.1.2.6" evidence="1"/>
<dbReference type="EMBL" id="CP000544">
    <property type="protein sequence ID" value="ABM62351.1"/>
    <property type="molecule type" value="Genomic_DNA"/>
</dbReference>
<dbReference type="RefSeq" id="WP_011814373.1">
    <property type="nucleotide sequence ID" value="NC_008789.1"/>
</dbReference>
<dbReference type="SMR" id="A1WXD9"/>
<dbReference type="STRING" id="349124.Hhal_1587"/>
<dbReference type="KEGG" id="hha:Hhal_1587"/>
<dbReference type="eggNOG" id="COG0491">
    <property type="taxonomic scope" value="Bacteria"/>
</dbReference>
<dbReference type="HOGENOM" id="CLU_030571_4_1_6"/>
<dbReference type="OrthoDB" id="9802248at2"/>
<dbReference type="UniPathway" id="UPA00619">
    <property type="reaction ID" value="UER00676"/>
</dbReference>
<dbReference type="Proteomes" id="UP000000647">
    <property type="component" value="Chromosome"/>
</dbReference>
<dbReference type="GO" id="GO:0004416">
    <property type="term" value="F:hydroxyacylglutathione hydrolase activity"/>
    <property type="evidence" value="ECO:0007669"/>
    <property type="project" value="UniProtKB-UniRule"/>
</dbReference>
<dbReference type="GO" id="GO:0046872">
    <property type="term" value="F:metal ion binding"/>
    <property type="evidence" value="ECO:0007669"/>
    <property type="project" value="UniProtKB-KW"/>
</dbReference>
<dbReference type="GO" id="GO:0019243">
    <property type="term" value="P:methylglyoxal catabolic process to D-lactate via S-lactoyl-glutathione"/>
    <property type="evidence" value="ECO:0007669"/>
    <property type="project" value="InterPro"/>
</dbReference>
<dbReference type="CDD" id="cd07723">
    <property type="entry name" value="hydroxyacylglutathione_hydrolase_MBL-fold"/>
    <property type="match status" value="1"/>
</dbReference>
<dbReference type="Gene3D" id="3.60.15.10">
    <property type="entry name" value="Ribonuclease Z/Hydroxyacylglutathione hydrolase-like"/>
    <property type="match status" value="1"/>
</dbReference>
<dbReference type="HAMAP" id="MF_01374">
    <property type="entry name" value="Glyoxalase_2"/>
    <property type="match status" value="1"/>
</dbReference>
<dbReference type="InterPro" id="IPR035680">
    <property type="entry name" value="Clx_II_MBL"/>
</dbReference>
<dbReference type="InterPro" id="IPR050110">
    <property type="entry name" value="Glyoxalase_II_hydrolase"/>
</dbReference>
<dbReference type="InterPro" id="IPR032282">
    <property type="entry name" value="HAGH_C"/>
</dbReference>
<dbReference type="InterPro" id="IPR017782">
    <property type="entry name" value="Hydroxyacylglutathione_Hdrlase"/>
</dbReference>
<dbReference type="InterPro" id="IPR001279">
    <property type="entry name" value="Metallo-B-lactamas"/>
</dbReference>
<dbReference type="InterPro" id="IPR036866">
    <property type="entry name" value="RibonucZ/Hydroxyglut_hydro"/>
</dbReference>
<dbReference type="NCBIfam" id="TIGR03413">
    <property type="entry name" value="GSH_gloB"/>
    <property type="match status" value="1"/>
</dbReference>
<dbReference type="PANTHER" id="PTHR43705">
    <property type="entry name" value="HYDROXYACYLGLUTATHIONE HYDROLASE"/>
    <property type="match status" value="1"/>
</dbReference>
<dbReference type="PANTHER" id="PTHR43705:SF1">
    <property type="entry name" value="HYDROXYACYLGLUTATHIONE HYDROLASE GLOB"/>
    <property type="match status" value="1"/>
</dbReference>
<dbReference type="Pfam" id="PF16123">
    <property type="entry name" value="HAGH_C"/>
    <property type="match status" value="1"/>
</dbReference>
<dbReference type="Pfam" id="PF00753">
    <property type="entry name" value="Lactamase_B"/>
    <property type="match status" value="1"/>
</dbReference>
<dbReference type="PIRSF" id="PIRSF005457">
    <property type="entry name" value="Glx"/>
    <property type="match status" value="1"/>
</dbReference>
<dbReference type="SMART" id="SM00849">
    <property type="entry name" value="Lactamase_B"/>
    <property type="match status" value="1"/>
</dbReference>
<dbReference type="SUPFAM" id="SSF56281">
    <property type="entry name" value="Metallo-hydrolase/oxidoreductase"/>
    <property type="match status" value="1"/>
</dbReference>
<feature type="chain" id="PRO_1000144769" description="Hydroxyacylglutathione hydrolase">
    <location>
        <begin position="1"/>
        <end position="255"/>
    </location>
</feature>
<feature type="binding site" evidence="1">
    <location>
        <position position="55"/>
    </location>
    <ligand>
        <name>Zn(2+)</name>
        <dbReference type="ChEBI" id="CHEBI:29105"/>
        <label>1</label>
    </ligand>
</feature>
<feature type="binding site" evidence="1">
    <location>
        <position position="57"/>
    </location>
    <ligand>
        <name>Zn(2+)</name>
        <dbReference type="ChEBI" id="CHEBI:29105"/>
        <label>1</label>
    </ligand>
</feature>
<feature type="binding site" evidence="1">
    <location>
        <position position="59"/>
    </location>
    <ligand>
        <name>Zn(2+)</name>
        <dbReference type="ChEBI" id="CHEBI:29105"/>
        <label>2</label>
    </ligand>
</feature>
<feature type="binding site" evidence="1">
    <location>
        <position position="60"/>
    </location>
    <ligand>
        <name>Zn(2+)</name>
        <dbReference type="ChEBI" id="CHEBI:29105"/>
        <label>2</label>
    </ligand>
</feature>
<feature type="binding site" evidence="1">
    <location>
        <position position="112"/>
    </location>
    <ligand>
        <name>Zn(2+)</name>
        <dbReference type="ChEBI" id="CHEBI:29105"/>
        <label>1</label>
    </ligand>
</feature>
<feature type="binding site" evidence="1">
    <location>
        <position position="129"/>
    </location>
    <ligand>
        <name>Zn(2+)</name>
        <dbReference type="ChEBI" id="CHEBI:29105"/>
        <label>1</label>
    </ligand>
</feature>
<feature type="binding site" evidence="1">
    <location>
        <position position="129"/>
    </location>
    <ligand>
        <name>Zn(2+)</name>
        <dbReference type="ChEBI" id="CHEBI:29105"/>
        <label>2</label>
    </ligand>
</feature>
<feature type="binding site" evidence="1">
    <location>
        <position position="167"/>
    </location>
    <ligand>
        <name>Zn(2+)</name>
        <dbReference type="ChEBI" id="CHEBI:29105"/>
        <label>2</label>
    </ligand>
</feature>